<feature type="chain" id="PRO_1000130858" description="UDP-N-acetylmuramoylalanine--D-glutamate ligase">
    <location>
        <begin position="1"/>
        <end position="446"/>
    </location>
</feature>
<feature type="binding site" evidence="1">
    <location>
        <begin position="115"/>
        <end position="121"/>
    </location>
    <ligand>
        <name>ATP</name>
        <dbReference type="ChEBI" id="CHEBI:30616"/>
    </ligand>
</feature>
<keyword id="KW-0067">ATP-binding</keyword>
<keyword id="KW-0131">Cell cycle</keyword>
<keyword id="KW-0132">Cell division</keyword>
<keyword id="KW-0133">Cell shape</keyword>
<keyword id="KW-0961">Cell wall biogenesis/degradation</keyword>
<keyword id="KW-0963">Cytoplasm</keyword>
<keyword id="KW-0436">Ligase</keyword>
<keyword id="KW-0547">Nucleotide-binding</keyword>
<keyword id="KW-0573">Peptidoglycan synthesis</keyword>
<keyword id="KW-1185">Reference proteome</keyword>
<evidence type="ECO:0000255" key="1">
    <source>
        <dbReference type="HAMAP-Rule" id="MF_00639"/>
    </source>
</evidence>
<dbReference type="EC" id="6.3.2.9" evidence="1"/>
<dbReference type="EMBL" id="CP001089">
    <property type="protein sequence ID" value="ACD94398.1"/>
    <property type="molecule type" value="Genomic_DNA"/>
</dbReference>
<dbReference type="RefSeq" id="WP_012468754.1">
    <property type="nucleotide sequence ID" value="NC_010814.1"/>
</dbReference>
<dbReference type="SMR" id="B3E3Y4"/>
<dbReference type="STRING" id="398767.Glov_0672"/>
<dbReference type="KEGG" id="glo:Glov_0672"/>
<dbReference type="eggNOG" id="COG0771">
    <property type="taxonomic scope" value="Bacteria"/>
</dbReference>
<dbReference type="HOGENOM" id="CLU_032540_0_0_7"/>
<dbReference type="OrthoDB" id="9809796at2"/>
<dbReference type="UniPathway" id="UPA00219"/>
<dbReference type="Proteomes" id="UP000002420">
    <property type="component" value="Chromosome"/>
</dbReference>
<dbReference type="GO" id="GO:0005737">
    <property type="term" value="C:cytoplasm"/>
    <property type="evidence" value="ECO:0007669"/>
    <property type="project" value="UniProtKB-SubCell"/>
</dbReference>
<dbReference type="GO" id="GO:0005524">
    <property type="term" value="F:ATP binding"/>
    <property type="evidence" value="ECO:0007669"/>
    <property type="project" value="UniProtKB-UniRule"/>
</dbReference>
<dbReference type="GO" id="GO:0008764">
    <property type="term" value="F:UDP-N-acetylmuramoylalanine-D-glutamate ligase activity"/>
    <property type="evidence" value="ECO:0007669"/>
    <property type="project" value="UniProtKB-UniRule"/>
</dbReference>
<dbReference type="GO" id="GO:0051301">
    <property type="term" value="P:cell division"/>
    <property type="evidence" value="ECO:0007669"/>
    <property type="project" value="UniProtKB-KW"/>
</dbReference>
<dbReference type="GO" id="GO:0071555">
    <property type="term" value="P:cell wall organization"/>
    <property type="evidence" value="ECO:0007669"/>
    <property type="project" value="UniProtKB-KW"/>
</dbReference>
<dbReference type="GO" id="GO:0009252">
    <property type="term" value="P:peptidoglycan biosynthetic process"/>
    <property type="evidence" value="ECO:0007669"/>
    <property type="project" value="UniProtKB-UniRule"/>
</dbReference>
<dbReference type="GO" id="GO:0008360">
    <property type="term" value="P:regulation of cell shape"/>
    <property type="evidence" value="ECO:0007669"/>
    <property type="project" value="UniProtKB-KW"/>
</dbReference>
<dbReference type="Gene3D" id="3.90.190.20">
    <property type="entry name" value="Mur ligase, C-terminal domain"/>
    <property type="match status" value="1"/>
</dbReference>
<dbReference type="Gene3D" id="3.40.1190.10">
    <property type="entry name" value="Mur-like, catalytic domain"/>
    <property type="match status" value="1"/>
</dbReference>
<dbReference type="Gene3D" id="3.40.50.720">
    <property type="entry name" value="NAD(P)-binding Rossmann-like Domain"/>
    <property type="match status" value="1"/>
</dbReference>
<dbReference type="HAMAP" id="MF_00639">
    <property type="entry name" value="MurD"/>
    <property type="match status" value="1"/>
</dbReference>
<dbReference type="InterPro" id="IPR036565">
    <property type="entry name" value="Mur-like_cat_sf"/>
</dbReference>
<dbReference type="InterPro" id="IPR004101">
    <property type="entry name" value="Mur_ligase_C"/>
</dbReference>
<dbReference type="InterPro" id="IPR036615">
    <property type="entry name" value="Mur_ligase_C_dom_sf"/>
</dbReference>
<dbReference type="InterPro" id="IPR013221">
    <property type="entry name" value="Mur_ligase_cen"/>
</dbReference>
<dbReference type="InterPro" id="IPR005762">
    <property type="entry name" value="MurD"/>
</dbReference>
<dbReference type="NCBIfam" id="TIGR01087">
    <property type="entry name" value="murD"/>
    <property type="match status" value="1"/>
</dbReference>
<dbReference type="PANTHER" id="PTHR43692">
    <property type="entry name" value="UDP-N-ACETYLMURAMOYLALANINE--D-GLUTAMATE LIGASE"/>
    <property type="match status" value="1"/>
</dbReference>
<dbReference type="PANTHER" id="PTHR43692:SF1">
    <property type="entry name" value="UDP-N-ACETYLMURAMOYLALANINE--D-GLUTAMATE LIGASE"/>
    <property type="match status" value="1"/>
</dbReference>
<dbReference type="Pfam" id="PF02875">
    <property type="entry name" value="Mur_ligase_C"/>
    <property type="match status" value="1"/>
</dbReference>
<dbReference type="Pfam" id="PF08245">
    <property type="entry name" value="Mur_ligase_M"/>
    <property type="match status" value="1"/>
</dbReference>
<dbReference type="Pfam" id="PF21799">
    <property type="entry name" value="MurD-like_N"/>
    <property type="match status" value="1"/>
</dbReference>
<dbReference type="SUPFAM" id="SSF51984">
    <property type="entry name" value="MurCD N-terminal domain"/>
    <property type="match status" value="1"/>
</dbReference>
<dbReference type="SUPFAM" id="SSF53623">
    <property type="entry name" value="MurD-like peptide ligases, catalytic domain"/>
    <property type="match status" value="1"/>
</dbReference>
<dbReference type="SUPFAM" id="SSF53244">
    <property type="entry name" value="MurD-like peptide ligases, peptide-binding domain"/>
    <property type="match status" value="1"/>
</dbReference>
<gene>
    <name evidence="1" type="primary">murD</name>
    <name type="ordered locus">Glov_0672</name>
</gene>
<organism>
    <name type="scientific">Trichlorobacter lovleyi (strain ATCC BAA-1151 / DSM 17278 / SZ)</name>
    <name type="common">Geobacter lovleyi</name>
    <dbReference type="NCBI Taxonomy" id="398767"/>
    <lineage>
        <taxon>Bacteria</taxon>
        <taxon>Pseudomonadati</taxon>
        <taxon>Thermodesulfobacteriota</taxon>
        <taxon>Desulfuromonadia</taxon>
        <taxon>Geobacterales</taxon>
        <taxon>Geobacteraceae</taxon>
        <taxon>Trichlorobacter</taxon>
    </lineage>
</organism>
<name>MURD_TRIL1</name>
<comment type="function">
    <text evidence="1">Cell wall formation. Catalyzes the addition of glutamate to the nucleotide precursor UDP-N-acetylmuramoyl-L-alanine (UMA).</text>
</comment>
<comment type="catalytic activity">
    <reaction evidence="1">
        <text>UDP-N-acetyl-alpha-D-muramoyl-L-alanine + D-glutamate + ATP = UDP-N-acetyl-alpha-D-muramoyl-L-alanyl-D-glutamate + ADP + phosphate + H(+)</text>
        <dbReference type="Rhea" id="RHEA:16429"/>
        <dbReference type="ChEBI" id="CHEBI:15378"/>
        <dbReference type="ChEBI" id="CHEBI:29986"/>
        <dbReference type="ChEBI" id="CHEBI:30616"/>
        <dbReference type="ChEBI" id="CHEBI:43474"/>
        <dbReference type="ChEBI" id="CHEBI:83898"/>
        <dbReference type="ChEBI" id="CHEBI:83900"/>
        <dbReference type="ChEBI" id="CHEBI:456216"/>
        <dbReference type="EC" id="6.3.2.9"/>
    </reaction>
</comment>
<comment type="pathway">
    <text evidence="1">Cell wall biogenesis; peptidoglycan biosynthesis.</text>
</comment>
<comment type="subcellular location">
    <subcellularLocation>
        <location evidence="1">Cytoplasm</location>
    </subcellularLocation>
</comment>
<comment type="similarity">
    <text evidence="1">Belongs to the MurCDEF family.</text>
</comment>
<proteinExistence type="inferred from homology"/>
<accession>B3E3Y4</accession>
<protein>
    <recommendedName>
        <fullName evidence="1">UDP-N-acetylmuramoylalanine--D-glutamate ligase</fullName>
        <ecNumber evidence="1">6.3.2.9</ecNumber>
    </recommendedName>
    <alternativeName>
        <fullName evidence="1">D-glutamic acid-adding enzyme</fullName>
    </alternativeName>
    <alternativeName>
        <fullName evidence="1">UDP-N-acetylmuramoyl-L-alanyl-D-glutamate synthetase</fullName>
    </alternativeName>
</protein>
<reference key="1">
    <citation type="submission" date="2008-05" db="EMBL/GenBank/DDBJ databases">
        <title>Complete sequence of chromosome of Geobacter lovleyi SZ.</title>
        <authorList>
            <consortium name="US DOE Joint Genome Institute"/>
            <person name="Lucas S."/>
            <person name="Copeland A."/>
            <person name="Lapidus A."/>
            <person name="Glavina del Rio T."/>
            <person name="Dalin E."/>
            <person name="Tice H."/>
            <person name="Bruce D."/>
            <person name="Goodwin L."/>
            <person name="Pitluck S."/>
            <person name="Chertkov O."/>
            <person name="Meincke L."/>
            <person name="Brettin T."/>
            <person name="Detter J.C."/>
            <person name="Han C."/>
            <person name="Tapia R."/>
            <person name="Kuske C.R."/>
            <person name="Schmutz J."/>
            <person name="Larimer F."/>
            <person name="Land M."/>
            <person name="Hauser L."/>
            <person name="Kyrpides N."/>
            <person name="Mikhailova N."/>
            <person name="Sung Y."/>
            <person name="Fletcher K.E."/>
            <person name="Ritalahti K.M."/>
            <person name="Loeffler F.E."/>
            <person name="Richardson P."/>
        </authorList>
    </citation>
    <scope>NUCLEOTIDE SEQUENCE [LARGE SCALE GENOMIC DNA]</scope>
    <source>
        <strain>ATCC BAA-1151 / DSM 17278 / SZ</strain>
    </source>
</reference>
<sequence length="446" mass="48826">MELRTKKTTVMGLAKTGVASARFLAQQGARVTATDMRDETALATVLSELAGLDIRFVLGHHDEADFTAADLVVVSPGVPQEHPLLRKTTEAGVAVVSEIELASRFITAPLVAITGTNGKTTTTTLAGELFRANGFSTYVGGNIGDPLIDLPASGEPVERAVAEISSFQLEWISSFRPKVAALLNITEDHLDRYPSYQAYINAKLRIFENQTADDFAVVNRDDELVWQAAQSLKAQLFPFSRRHELTEGIFSREGELLFRHHGQELSIPTAGFRLQGVHNLENIMAALACCLLLGCQRETSLELLNRFEALHHRMEFVREVADVRYFEDSKATNVGSVAKALESFENITLIAGGKDKGGSYAPLAELVQQRVRHLVLIGEAAERMQQELGDLTATHKAATLEEAVQLSADLTAPGGVVLLSPACSSFDMFKDYEERAQRFITAVKRL</sequence>